<gene>
    <name evidence="1" type="primary">rnhB</name>
    <name type="ordered locus">Cpha266_0038</name>
</gene>
<feature type="chain" id="PRO_1000031133" description="Ribonuclease HII">
    <location>
        <begin position="1"/>
        <end position="205"/>
    </location>
</feature>
<feature type="domain" description="RNase H type-2" evidence="2">
    <location>
        <begin position="14"/>
        <end position="205"/>
    </location>
</feature>
<feature type="binding site" evidence="1">
    <location>
        <position position="20"/>
    </location>
    <ligand>
        <name>a divalent metal cation</name>
        <dbReference type="ChEBI" id="CHEBI:60240"/>
    </ligand>
</feature>
<feature type="binding site" evidence="1">
    <location>
        <position position="21"/>
    </location>
    <ligand>
        <name>a divalent metal cation</name>
        <dbReference type="ChEBI" id="CHEBI:60240"/>
    </ligand>
</feature>
<feature type="binding site" evidence="1">
    <location>
        <position position="117"/>
    </location>
    <ligand>
        <name>a divalent metal cation</name>
        <dbReference type="ChEBI" id="CHEBI:60240"/>
    </ligand>
</feature>
<reference key="1">
    <citation type="submission" date="2006-12" db="EMBL/GenBank/DDBJ databases">
        <title>Complete sequence of Chlorobium phaeobacteroides DSM 266.</title>
        <authorList>
            <consortium name="US DOE Joint Genome Institute"/>
            <person name="Copeland A."/>
            <person name="Lucas S."/>
            <person name="Lapidus A."/>
            <person name="Barry K."/>
            <person name="Detter J.C."/>
            <person name="Glavina del Rio T."/>
            <person name="Hammon N."/>
            <person name="Israni S."/>
            <person name="Pitluck S."/>
            <person name="Goltsman E."/>
            <person name="Schmutz J."/>
            <person name="Larimer F."/>
            <person name="Land M."/>
            <person name="Hauser L."/>
            <person name="Mikhailova N."/>
            <person name="Li T."/>
            <person name="Overmann J."/>
            <person name="Bryant D.A."/>
            <person name="Richardson P."/>
        </authorList>
    </citation>
    <scope>NUCLEOTIDE SEQUENCE [LARGE SCALE GENOMIC DNA]</scope>
    <source>
        <strain>DSM 266 / SMG 266 / 2430</strain>
    </source>
</reference>
<accession>A1BCI1</accession>
<sequence>MTTDYEYSLWPTLSLISGIDEAGRGPLAGPVVAAAVIFPRWFRPRHAGLDKLDDSKKLSPNLREQLAPTIKTFAAFWAVAVIEPDIIDRINIFQATMQAMNNAVASLHQPPELILVDGNRFMPNAPIPYETIVKGDAKVFSIAAASVLAKTHRDAIMTAYGKEYPEYGFERHFGYPTASHIKAIETFGRTPVHRKSFRLKQLGEK</sequence>
<name>RNH2_CHLPD</name>
<proteinExistence type="inferred from homology"/>
<protein>
    <recommendedName>
        <fullName evidence="1">Ribonuclease HII</fullName>
        <shortName evidence="1">RNase HII</shortName>
        <ecNumber evidence="1">3.1.26.4</ecNumber>
    </recommendedName>
</protein>
<organism>
    <name type="scientific">Chlorobium phaeobacteroides (strain DSM 266 / SMG 266 / 2430)</name>
    <dbReference type="NCBI Taxonomy" id="290317"/>
    <lineage>
        <taxon>Bacteria</taxon>
        <taxon>Pseudomonadati</taxon>
        <taxon>Chlorobiota</taxon>
        <taxon>Chlorobiia</taxon>
        <taxon>Chlorobiales</taxon>
        <taxon>Chlorobiaceae</taxon>
        <taxon>Chlorobium/Pelodictyon group</taxon>
        <taxon>Chlorobium</taxon>
    </lineage>
</organism>
<evidence type="ECO:0000255" key="1">
    <source>
        <dbReference type="HAMAP-Rule" id="MF_00052"/>
    </source>
</evidence>
<evidence type="ECO:0000255" key="2">
    <source>
        <dbReference type="PROSITE-ProRule" id="PRU01319"/>
    </source>
</evidence>
<keyword id="KW-0963">Cytoplasm</keyword>
<keyword id="KW-0255">Endonuclease</keyword>
<keyword id="KW-0378">Hydrolase</keyword>
<keyword id="KW-0464">Manganese</keyword>
<keyword id="KW-0479">Metal-binding</keyword>
<keyword id="KW-0540">Nuclease</keyword>
<keyword id="KW-1185">Reference proteome</keyword>
<comment type="function">
    <text evidence="1">Endonuclease that specifically degrades the RNA of RNA-DNA hybrids.</text>
</comment>
<comment type="catalytic activity">
    <reaction evidence="1">
        <text>Endonucleolytic cleavage to 5'-phosphomonoester.</text>
        <dbReference type="EC" id="3.1.26.4"/>
    </reaction>
</comment>
<comment type="cofactor">
    <cofactor evidence="1">
        <name>Mn(2+)</name>
        <dbReference type="ChEBI" id="CHEBI:29035"/>
    </cofactor>
    <cofactor evidence="1">
        <name>Mg(2+)</name>
        <dbReference type="ChEBI" id="CHEBI:18420"/>
    </cofactor>
    <text evidence="1">Manganese or magnesium. Binds 1 divalent metal ion per monomer in the absence of substrate. May bind a second metal ion after substrate binding.</text>
</comment>
<comment type="subcellular location">
    <subcellularLocation>
        <location evidence="1">Cytoplasm</location>
    </subcellularLocation>
</comment>
<comment type="similarity">
    <text evidence="1">Belongs to the RNase HII family.</text>
</comment>
<dbReference type="EC" id="3.1.26.4" evidence="1"/>
<dbReference type="EMBL" id="CP000492">
    <property type="protein sequence ID" value="ABL64108.1"/>
    <property type="molecule type" value="Genomic_DNA"/>
</dbReference>
<dbReference type="RefSeq" id="WP_011743950.1">
    <property type="nucleotide sequence ID" value="NC_008639.1"/>
</dbReference>
<dbReference type="SMR" id="A1BCI1"/>
<dbReference type="STRING" id="290317.Cpha266_0038"/>
<dbReference type="KEGG" id="cph:Cpha266_0038"/>
<dbReference type="eggNOG" id="COG0164">
    <property type="taxonomic scope" value="Bacteria"/>
</dbReference>
<dbReference type="HOGENOM" id="CLU_036532_3_2_10"/>
<dbReference type="Proteomes" id="UP000008701">
    <property type="component" value="Chromosome"/>
</dbReference>
<dbReference type="GO" id="GO:0005737">
    <property type="term" value="C:cytoplasm"/>
    <property type="evidence" value="ECO:0007669"/>
    <property type="project" value="UniProtKB-SubCell"/>
</dbReference>
<dbReference type="GO" id="GO:0032299">
    <property type="term" value="C:ribonuclease H2 complex"/>
    <property type="evidence" value="ECO:0007669"/>
    <property type="project" value="TreeGrafter"/>
</dbReference>
<dbReference type="GO" id="GO:0030145">
    <property type="term" value="F:manganese ion binding"/>
    <property type="evidence" value="ECO:0007669"/>
    <property type="project" value="UniProtKB-UniRule"/>
</dbReference>
<dbReference type="GO" id="GO:0003723">
    <property type="term" value="F:RNA binding"/>
    <property type="evidence" value="ECO:0007669"/>
    <property type="project" value="InterPro"/>
</dbReference>
<dbReference type="GO" id="GO:0004523">
    <property type="term" value="F:RNA-DNA hybrid ribonuclease activity"/>
    <property type="evidence" value="ECO:0007669"/>
    <property type="project" value="UniProtKB-UniRule"/>
</dbReference>
<dbReference type="GO" id="GO:0043137">
    <property type="term" value="P:DNA replication, removal of RNA primer"/>
    <property type="evidence" value="ECO:0007669"/>
    <property type="project" value="TreeGrafter"/>
</dbReference>
<dbReference type="GO" id="GO:0006298">
    <property type="term" value="P:mismatch repair"/>
    <property type="evidence" value="ECO:0007669"/>
    <property type="project" value="TreeGrafter"/>
</dbReference>
<dbReference type="CDD" id="cd07182">
    <property type="entry name" value="RNase_HII_bacteria_HII_like"/>
    <property type="match status" value="1"/>
</dbReference>
<dbReference type="Gene3D" id="3.30.420.10">
    <property type="entry name" value="Ribonuclease H-like superfamily/Ribonuclease H"/>
    <property type="match status" value="1"/>
</dbReference>
<dbReference type="HAMAP" id="MF_00052_B">
    <property type="entry name" value="RNase_HII_B"/>
    <property type="match status" value="1"/>
</dbReference>
<dbReference type="InterPro" id="IPR022898">
    <property type="entry name" value="RNase_HII"/>
</dbReference>
<dbReference type="InterPro" id="IPR001352">
    <property type="entry name" value="RNase_HII/HIII"/>
</dbReference>
<dbReference type="InterPro" id="IPR024567">
    <property type="entry name" value="RNase_HII/HIII_dom"/>
</dbReference>
<dbReference type="InterPro" id="IPR012337">
    <property type="entry name" value="RNaseH-like_sf"/>
</dbReference>
<dbReference type="InterPro" id="IPR036397">
    <property type="entry name" value="RNaseH_sf"/>
</dbReference>
<dbReference type="NCBIfam" id="NF000595">
    <property type="entry name" value="PRK00015.1-3"/>
    <property type="match status" value="1"/>
</dbReference>
<dbReference type="PANTHER" id="PTHR10954">
    <property type="entry name" value="RIBONUCLEASE H2 SUBUNIT A"/>
    <property type="match status" value="1"/>
</dbReference>
<dbReference type="PANTHER" id="PTHR10954:SF18">
    <property type="entry name" value="RIBONUCLEASE HII"/>
    <property type="match status" value="1"/>
</dbReference>
<dbReference type="Pfam" id="PF01351">
    <property type="entry name" value="RNase_HII"/>
    <property type="match status" value="1"/>
</dbReference>
<dbReference type="SUPFAM" id="SSF53098">
    <property type="entry name" value="Ribonuclease H-like"/>
    <property type="match status" value="1"/>
</dbReference>
<dbReference type="PROSITE" id="PS51975">
    <property type="entry name" value="RNASE_H_2"/>
    <property type="match status" value="1"/>
</dbReference>